<feature type="chain" id="PRO_0000290680" description="Undecaprenyl-diphosphatase">
    <location>
        <begin position="1"/>
        <end position="290"/>
    </location>
</feature>
<feature type="transmembrane region" description="Helical" evidence="1">
    <location>
        <begin position="1"/>
        <end position="21"/>
    </location>
</feature>
<feature type="transmembrane region" description="Helical" evidence="1">
    <location>
        <begin position="49"/>
        <end position="69"/>
    </location>
</feature>
<feature type="transmembrane region" description="Helical" evidence="1">
    <location>
        <begin position="101"/>
        <end position="121"/>
    </location>
</feature>
<feature type="transmembrane region" description="Helical" evidence="1">
    <location>
        <begin position="126"/>
        <end position="146"/>
    </location>
</feature>
<feature type="transmembrane region" description="Helical" evidence="1">
    <location>
        <begin position="160"/>
        <end position="180"/>
    </location>
</feature>
<feature type="transmembrane region" description="Helical" evidence="1">
    <location>
        <begin position="203"/>
        <end position="223"/>
    </location>
</feature>
<feature type="transmembrane region" description="Helical" evidence="1">
    <location>
        <begin position="232"/>
        <end position="252"/>
    </location>
</feature>
<feature type="transmembrane region" description="Helical" evidence="1">
    <location>
        <begin position="266"/>
        <end position="286"/>
    </location>
</feature>
<protein>
    <recommendedName>
        <fullName evidence="1">Undecaprenyl-diphosphatase</fullName>
        <ecNumber evidence="1">3.6.1.27</ecNumber>
    </recommendedName>
    <alternativeName>
        <fullName evidence="1">Bacitracin resistance protein</fullName>
    </alternativeName>
    <alternativeName>
        <fullName evidence="1">Undecaprenyl pyrophosphate phosphatase</fullName>
    </alternativeName>
</protein>
<keyword id="KW-0046">Antibiotic resistance</keyword>
<keyword id="KW-0997">Cell inner membrane</keyword>
<keyword id="KW-1003">Cell membrane</keyword>
<keyword id="KW-0133">Cell shape</keyword>
<keyword id="KW-0961">Cell wall biogenesis/degradation</keyword>
<keyword id="KW-0378">Hydrolase</keyword>
<keyword id="KW-0472">Membrane</keyword>
<keyword id="KW-0573">Peptidoglycan synthesis</keyword>
<keyword id="KW-1185">Reference proteome</keyword>
<keyword id="KW-0812">Transmembrane</keyword>
<keyword id="KW-1133">Transmembrane helix</keyword>
<accession>Q0AAG2</accession>
<reference key="1">
    <citation type="submission" date="2006-08" db="EMBL/GenBank/DDBJ databases">
        <title>Complete sequence of Alkalilimnicola ehrilichei MLHE-1.</title>
        <authorList>
            <person name="Copeland A."/>
            <person name="Lucas S."/>
            <person name="Lapidus A."/>
            <person name="Barry K."/>
            <person name="Detter J.C."/>
            <person name="Glavina del Rio T."/>
            <person name="Hammon N."/>
            <person name="Israni S."/>
            <person name="Dalin E."/>
            <person name="Tice H."/>
            <person name="Pitluck S."/>
            <person name="Sims D."/>
            <person name="Brettin T."/>
            <person name="Bruce D."/>
            <person name="Han C."/>
            <person name="Tapia R."/>
            <person name="Gilna P."/>
            <person name="Schmutz J."/>
            <person name="Larimer F."/>
            <person name="Land M."/>
            <person name="Hauser L."/>
            <person name="Kyrpides N."/>
            <person name="Mikhailova N."/>
            <person name="Oremland R.S."/>
            <person name="Hoeft S.E."/>
            <person name="Switzer-Blum J."/>
            <person name="Kulp T."/>
            <person name="King G."/>
            <person name="Tabita R."/>
            <person name="Witte B."/>
            <person name="Santini J.M."/>
            <person name="Basu P."/>
            <person name="Hollibaugh J.T."/>
            <person name="Xie G."/>
            <person name="Stolz J.F."/>
            <person name="Richardson P."/>
        </authorList>
    </citation>
    <scope>NUCLEOTIDE SEQUENCE [LARGE SCALE GENOMIC DNA]</scope>
    <source>
        <strain>ATCC BAA-1101 / DSM 17681 / MLHE-1</strain>
    </source>
</reference>
<sequence>MALWIAALLGVIQGIFMFLPVSSTAHMVLTEHWLIARGETLPPPESAEMILFALVVHVGTLVSIAVVFWPSLWRFSLNALGGAWEWAGRGGRGGLPLYWRLFWLGMFSVLCTGVLGLTLKATFEHVFASPLMIAGTLTLTGILLWWTDRLAPRRRGLKGINLKVAGVIGLAQGFALMPGLSRSAMTIVFALFTGLKRRWAAEYSFFLAIPTICAATLLQAIEVYRLGLPNTVGFSALAVGFVVAAIVGIISLKLVIYFLYRARLKVFSFYVWALALGIATGLIDLAPALG</sequence>
<evidence type="ECO:0000255" key="1">
    <source>
        <dbReference type="HAMAP-Rule" id="MF_01006"/>
    </source>
</evidence>
<comment type="function">
    <text evidence="1">Catalyzes the dephosphorylation of undecaprenyl diphosphate (UPP). Confers resistance to bacitracin.</text>
</comment>
<comment type="catalytic activity">
    <reaction evidence="1">
        <text>di-trans,octa-cis-undecaprenyl diphosphate + H2O = di-trans,octa-cis-undecaprenyl phosphate + phosphate + H(+)</text>
        <dbReference type="Rhea" id="RHEA:28094"/>
        <dbReference type="ChEBI" id="CHEBI:15377"/>
        <dbReference type="ChEBI" id="CHEBI:15378"/>
        <dbReference type="ChEBI" id="CHEBI:43474"/>
        <dbReference type="ChEBI" id="CHEBI:58405"/>
        <dbReference type="ChEBI" id="CHEBI:60392"/>
        <dbReference type="EC" id="3.6.1.27"/>
    </reaction>
</comment>
<comment type="subcellular location">
    <subcellularLocation>
        <location evidence="1">Cell inner membrane</location>
        <topology evidence="1">Multi-pass membrane protein</topology>
    </subcellularLocation>
</comment>
<comment type="miscellaneous">
    <text>Bacitracin is thought to be involved in the inhibition of peptidoglycan synthesis by sequestering undecaprenyl diphosphate, thereby reducing the pool of lipid carrier available.</text>
</comment>
<comment type="similarity">
    <text evidence="1">Belongs to the UppP family.</text>
</comment>
<dbReference type="EC" id="3.6.1.27" evidence="1"/>
<dbReference type="EMBL" id="CP000453">
    <property type="protein sequence ID" value="ABI56175.1"/>
    <property type="molecule type" value="Genomic_DNA"/>
</dbReference>
<dbReference type="RefSeq" id="WP_011628570.1">
    <property type="nucleotide sequence ID" value="NC_008340.1"/>
</dbReference>
<dbReference type="SMR" id="Q0AAG2"/>
<dbReference type="KEGG" id="aeh:Mlg_0821"/>
<dbReference type="eggNOG" id="COG1968">
    <property type="taxonomic scope" value="Bacteria"/>
</dbReference>
<dbReference type="HOGENOM" id="CLU_060296_1_2_6"/>
<dbReference type="OrthoDB" id="9808289at2"/>
<dbReference type="Proteomes" id="UP000001962">
    <property type="component" value="Chromosome"/>
</dbReference>
<dbReference type="GO" id="GO:0005886">
    <property type="term" value="C:plasma membrane"/>
    <property type="evidence" value="ECO:0007669"/>
    <property type="project" value="UniProtKB-SubCell"/>
</dbReference>
<dbReference type="GO" id="GO:0050380">
    <property type="term" value="F:undecaprenyl-diphosphatase activity"/>
    <property type="evidence" value="ECO:0007669"/>
    <property type="project" value="UniProtKB-UniRule"/>
</dbReference>
<dbReference type="GO" id="GO:0071555">
    <property type="term" value="P:cell wall organization"/>
    <property type="evidence" value="ECO:0007669"/>
    <property type="project" value="UniProtKB-KW"/>
</dbReference>
<dbReference type="GO" id="GO:0009252">
    <property type="term" value="P:peptidoglycan biosynthetic process"/>
    <property type="evidence" value="ECO:0007669"/>
    <property type="project" value="UniProtKB-KW"/>
</dbReference>
<dbReference type="GO" id="GO:0008360">
    <property type="term" value="P:regulation of cell shape"/>
    <property type="evidence" value="ECO:0007669"/>
    <property type="project" value="UniProtKB-KW"/>
</dbReference>
<dbReference type="GO" id="GO:0046677">
    <property type="term" value="P:response to antibiotic"/>
    <property type="evidence" value="ECO:0007669"/>
    <property type="project" value="UniProtKB-UniRule"/>
</dbReference>
<dbReference type="HAMAP" id="MF_01006">
    <property type="entry name" value="Undec_diphosphatase"/>
    <property type="match status" value="1"/>
</dbReference>
<dbReference type="InterPro" id="IPR003824">
    <property type="entry name" value="UppP"/>
</dbReference>
<dbReference type="PANTHER" id="PTHR30622">
    <property type="entry name" value="UNDECAPRENYL-DIPHOSPHATASE"/>
    <property type="match status" value="1"/>
</dbReference>
<dbReference type="PANTHER" id="PTHR30622:SF2">
    <property type="entry name" value="UNDECAPRENYL-DIPHOSPHATASE"/>
    <property type="match status" value="1"/>
</dbReference>
<dbReference type="Pfam" id="PF02673">
    <property type="entry name" value="BacA"/>
    <property type="match status" value="1"/>
</dbReference>
<organism>
    <name type="scientific">Alkalilimnicola ehrlichii (strain ATCC BAA-1101 / DSM 17681 / MLHE-1)</name>
    <dbReference type="NCBI Taxonomy" id="187272"/>
    <lineage>
        <taxon>Bacteria</taxon>
        <taxon>Pseudomonadati</taxon>
        <taxon>Pseudomonadota</taxon>
        <taxon>Gammaproteobacteria</taxon>
        <taxon>Chromatiales</taxon>
        <taxon>Ectothiorhodospiraceae</taxon>
        <taxon>Alkalilimnicola</taxon>
    </lineage>
</organism>
<proteinExistence type="inferred from homology"/>
<gene>
    <name evidence="1" type="primary">uppP</name>
    <name type="ordered locus">Mlg_0821</name>
</gene>
<name>UPPP_ALKEH</name>